<reference key="1">
    <citation type="journal article" date="1996" name="Proc. Natl. Acad. Sci. U.S.A.">
        <title>Cloning, expression, and properties of the microtubule-stabilizing protein STOP.</title>
        <authorList>
            <person name="Bosc C."/>
            <person name="Cronk J.D."/>
            <person name="Pirollet F."/>
            <person name="Watterson D.M."/>
            <person name="Haiech J."/>
            <person name="Job D."/>
            <person name="Margolis R.L."/>
        </authorList>
    </citation>
    <scope>NUCLEOTIDE SEQUENCE [MRNA] (ISOFORM 1)</scope>
    <scope>PARTIAL PROTEIN SEQUENCE</scope>
    <scope>FUNCTION</scope>
    <scope>INTERACTION WITH CALMODULIN</scope>
    <scope>SUBCELLULAR LOCATION</scope>
    <source>
        <strain>Sprague-Dawley</strain>
        <tissue>Brain</tissue>
    </source>
</reference>
<reference key="2">
    <citation type="journal article" date="1998" name="J. Cell Biol.">
        <title>STOP proteins are responsible for the high degree of microtubule stabilization observed in neuronal cells.</title>
        <authorList>
            <person name="Guillaud L."/>
            <person name="Bosc C."/>
            <person name="Fourest-Lieuvin A."/>
            <person name="Denarier E."/>
            <person name="Pirollet F."/>
            <person name="Lafanechere L."/>
            <person name="Job D."/>
        </authorList>
    </citation>
    <scope>NUCLEOTIDE SEQUENCE [MRNA] (ISOFORM 2)</scope>
    <scope>FUNCTION</scope>
    <scope>SUBCELLULAR LOCATION</scope>
    <scope>DEVELOPMENTAL STAGE</scope>
    <source>
        <strain>Sprague-Dawley</strain>
        <tissue>Brain</tissue>
    </source>
</reference>
<reference key="3">
    <citation type="journal article" date="2004" name="Genome Res.">
        <title>The status, quality, and expansion of the NIH full-length cDNA project: the Mammalian Gene Collection (MGC).</title>
        <authorList>
            <consortium name="The MGC Project Team"/>
        </authorList>
    </citation>
    <scope>NUCLEOTIDE SEQUENCE [LARGE SCALE MRNA] OF 1-613 (ISOFORM 2)</scope>
    <source>
        <tissue>Testis</tissue>
    </source>
</reference>
<reference key="4">
    <citation type="journal article" date="2014" name="EMBO J.">
        <title>The FTLD risk factor TMEM106B and MAP6 control dendritic trafficking of lysosomes.</title>
        <authorList>
            <person name="Schwenk B.M."/>
            <person name="Lang C.M."/>
            <person name="Hogl S."/>
            <person name="Tahirovic S."/>
            <person name="Orozco D."/>
            <person name="Rentzsch K."/>
            <person name="Lichtenthaler S.F."/>
            <person name="Hoogenraad C.C."/>
            <person name="Capell A."/>
            <person name="Haass C."/>
            <person name="Edbauer D."/>
        </authorList>
    </citation>
    <scope>PROTEIN SEQUENCE OF 33-77; 139-150; 202-226; 239-247; 285-293; 331-364; 377-410; 455-462 AND 466-477</scope>
    <scope>INTERACTION WITH TMEM106B</scope>
    <scope>IDENTIFICATION BY MASS SPECTROMETRY</scope>
</reference>
<reference key="5">
    <citation type="journal article" date="1986" name="Proc. Natl. Acad. Sci. U.S.A.">
        <title>Purification and assay of a 145-kDa protein (STOP145) with microtubule-stabilizing and motility behavior.</title>
        <authorList>
            <person name="Margolis R.L."/>
            <person name="Rauch C.T."/>
            <person name="Job D."/>
        </authorList>
    </citation>
    <scope>FUNCTION</scope>
    <scope>SUBCELLULAR LOCATION</scope>
</reference>
<reference key="6">
    <citation type="journal article" date="2001" name="J. Biol. Chem.">
        <title>Identification of novel bifunctional calmodulin-binding and microtubule-stabilizing motifs in STOP proteins.</title>
        <authorList>
            <person name="Bosc C."/>
            <person name="Frank R."/>
            <person name="Denarier E."/>
            <person name="Ronjat M."/>
            <person name="Schweitzer A."/>
            <person name="Wehland J."/>
            <person name="Job D."/>
        </authorList>
    </citation>
    <scope>FUNCTION</scope>
    <scope>INTERACTION WITH CALMODULIN</scope>
</reference>
<reference key="7">
    <citation type="journal article" date="2003" name="J. Neurocytol.">
        <title>STOP (stable-tubule-only-polypeptide) is preferentially associated with the stable domain of axonal microtubules.</title>
        <authorList>
            <person name="Slaughter T."/>
            <person name="Black M.M."/>
        </authorList>
    </citation>
    <scope>SUBCELLULAR LOCATION</scope>
</reference>
<reference key="8">
    <citation type="journal article" date="2012" name="Nat. Commun.">
        <title>Quantitative maps of protein phosphorylation sites across 14 different rat organs and tissues.</title>
        <authorList>
            <person name="Lundby A."/>
            <person name="Secher A."/>
            <person name="Lage K."/>
            <person name="Nordsborg N.B."/>
            <person name="Dmytriyev A."/>
            <person name="Lundby C."/>
            <person name="Olsen J.V."/>
        </authorList>
    </citation>
    <scope>PHOSPHORYLATION [LARGE SCALE ANALYSIS] AT SER-185; SER-590; SER-681; SER-736 AND SER-951</scope>
    <scope>IDENTIFICATION BY MASS SPECTROMETRY [LARGE SCALE ANALYSIS]</scope>
</reference>
<reference key="9">
    <citation type="journal article" date="2017" name="Neuron">
        <title>Dynamic palmitoylation targets MAP6 to the axon to promote microtubule stabilization during neuronal polarization.</title>
        <authorList>
            <person name="Tortosa E."/>
            <person name="Adolfs Y."/>
            <person name="Fukata M."/>
            <person name="Pasterkamp R.J."/>
            <person name="Kapitein L.C."/>
            <person name="Hoogenraad C.C."/>
        </authorList>
    </citation>
    <scope>FUNCTION</scope>
    <scope>SUBCELLULAR LOCATION</scope>
    <scope>DEVELOPMENTAL STAGE (ISOFORMS 1 AND 2)</scope>
    <scope>PALMITOYLATION AT CYS-5; CYS-10 AND CYS-11</scope>
    <scope>MUTAGENESIS OF CYS-5 AND 10-CYS-CYS-11</scope>
</reference>
<dbReference type="EMBL" id="X93495">
    <property type="protein sequence ID" value="CAA63762.1"/>
    <property type="molecule type" value="mRNA"/>
</dbReference>
<dbReference type="EMBL" id="AJ002556">
    <property type="protein sequence ID" value="CAA05555.1"/>
    <property type="molecule type" value="mRNA"/>
</dbReference>
<dbReference type="EMBL" id="BC078848">
    <property type="protein sequence ID" value="AAH78848.1"/>
    <property type="status" value="ALT_SEQ"/>
    <property type="molecule type" value="mRNA"/>
</dbReference>
<dbReference type="RefSeq" id="NP_001385530.1">
    <molecule id="Q63560-2"/>
    <property type="nucleotide sequence ID" value="NM_001398601.1"/>
</dbReference>
<dbReference type="RefSeq" id="NP_058900.1">
    <property type="nucleotide sequence ID" value="NM_017204.1"/>
</dbReference>
<dbReference type="BioGRID" id="248100">
    <property type="interactions" value="12"/>
</dbReference>
<dbReference type="FunCoup" id="Q63560">
    <property type="interactions" value="1530"/>
</dbReference>
<dbReference type="IntAct" id="Q63560">
    <property type="interactions" value="6"/>
</dbReference>
<dbReference type="MINT" id="Q63560"/>
<dbReference type="STRING" id="10116.ENSRNOP00000032018"/>
<dbReference type="GlyGen" id="Q63560">
    <property type="glycosylation" value="3 sites, 1 O-linked glycan (1 site)"/>
</dbReference>
<dbReference type="iPTMnet" id="Q63560"/>
<dbReference type="PhosphoSitePlus" id="Q63560"/>
<dbReference type="SwissPalm" id="Q63560"/>
<dbReference type="jPOST" id="Q63560"/>
<dbReference type="PaxDb" id="10116-ENSRNOP00000032018"/>
<dbReference type="UCSC" id="RGD:61804">
    <molecule id="Q63560-1"/>
    <property type="organism name" value="rat"/>
</dbReference>
<dbReference type="AGR" id="RGD:61804"/>
<dbReference type="RGD" id="61804">
    <property type="gene designation" value="Map6"/>
</dbReference>
<dbReference type="eggNOG" id="ENOG502QS1F">
    <property type="taxonomic scope" value="Eukaryota"/>
</dbReference>
<dbReference type="InParanoid" id="Q63560"/>
<dbReference type="PhylomeDB" id="Q63560"/>
<dbReference type="PRO" id="PR:Q63560"/>
<dbReference type="Proteomes" id="UP000002494">
    <property type="component" value="Unplaced"/>
</dbReference>
<dbReference type="GO" id="GO:0030424">
    <property type="term" value="C:axon"/>
    <property type="evidence" value="ECO:0000314"/>
    <property type="project" value="UniProtKB"/>
</dbReference>
<dbReference type="GO" id="GO:1904115">
    <property type="term" value="C:axon cytoplasm"/>
    <property type="evidence" value="ECO:0007669"/>
    <property type="project" value="GOC"/>
</dbReference>
<dbReference type="GO" id="GO:0005801">
    <property type="term" value="C:cis-Golgi network"/>
    <property type="evidence" value="ECO:0000318"/>
    <property type="project" value="GO_Central"/>
</dbReference>
<dbReference type="GO" id="GO:0030425">
    <property type="term" value="C:dendrite"/>
    <property type="evidence" value="ECO:0000314"/>
    <property type="project" value="UniProtKB"/>
</dbReference>
<dbReference type="GO" id="GO:0005794">
    <property type="term" value="C:Golgi apparatus"/>
    <property type="evidence" value="ECO:0000314"/>
    <property type="project" value="UniProtKB"/>
</dbReference>
<dbReference type="GO" id="GO:0005798">
    <property type="term" value="C:Golgi-associated vesicle"/>
    <property type="evidence" value="ECO:0000318"/>
    <property type="project" value="GO_Central"/>
</dbReference>
<dbReference type="GO" id="GO:0005874">
    <property type="term" value="C:microtubule"/>
    <property type="evidence" value="ECO:0000266"/>
    <property type="project" value="RGD"/>
</dbReference>
<dbReference type="GO" id="GO:0043005">
    <property type="term" value="C:neuron projection"/>
    <property type="evidence" value="ECO:0000314"/>
    <property type="project" value="UniProtKB"/>
</dbReference>
<dbReference type="GO" id="GO:0048471">
    <property type="term" value="C:perinuclear region of cytoplasm"/>
    <property type="evidence" value="ECO:0000266"/>
    <property type="project" value="RGD"/>
</dbReference>
<dbReference type="GO" id="GO:0099503">
    <property type="term" value="C:secretory vesicle"/>
    <property type="evidence" value="ECO:0000314"/>
    <property type="project" value="UniProtKB"/>
</dbReference>
<dbReference type="GO" id="GO:0030658">
    <property type="term" value="C:transport vesicle membrane"/>
    <property type="evidence" value="ECO:0007669"/>
    <property type="project" value="UniProtKB-SubCell"/>
</dbReference>
<dbReference type="GO" id="GO:0005516">
    <property type="term" value="F:calmodulin binding"/>
    <property type="evidence" value="ECO:0007669"/>
    <property type="project" value="UniProtKB-KW"/>
</dbReference>
<dbReference type="GO" id="GO:0008017">
    <property type="term" value="F:microtubule binding"/>
    <property type="evidence" value="ECO:0000314"/>
    <property type="project" value="UniProtKB"/>
</dbReference>
<dbReference type="GO" id="GO:0019896">
    <property type="term" value="P:axonal transport of mitochondrion"/>
    <property type="evidence" value="ECO:0000315"/>
    <property type="project" value="UniProtKB"/>
</dbReference>
<dbReference type="GO" id="GO:0030705">
    <property type="term" value="P:cytoskeleton-dependent intracellular transport"/>
    <property type="evidence" value="ECO:0000318"/>
    <property type="project" value="GO_Central"/>
</dbReference>
<dbReference type="GO" id="GO:0048813">
    <property type="term" value="P:dendrite morphogenesis"/>
    <property type="evidence" value="ECO:0000250"/>
    <property type="project" value="UniProtKB"/>
</dbReference>
<dbReference type="GO" id="GO:0032418">
    <property type="term" value="P:lysosome localization"/>
    <property type="evidence" value="ECO:0000250"/>
    <property type="project" value="UniProtKB"/>
</dbReference>
<dbReference type="GO" id="GO:0000226">
    <property type="term" value="P:microtubule cytoskeleton organization"/>
    <property type="evidence" value="ECO:0007669"/>
    <property type="project" value="InterPro"/>
</dbReference>
<dbReference type="GO" id="GO:0050772">
    <property type="term" value="P:positive regulation of axonogenesis"/>
    <property type="evidence" value="ECO:0000315"/>
    <property type="project" value="UniProtKB"/>
</dbReference>
<dbReference type="GO" id="GO:0070507">
    <property type="term" value="P:regulation of microtubule cytoskeleton organization"/>
    <property type="evidence" value="ECO:0000315"/>
    <property type="project" value="UniProtKB"/>
</dbReference>
<dbReference type="InterPro" id="IPR007882">
    <property type="entry name" value="MAP6"/>
</dbReference>
<dbReference type="PANTHER" id="PTHR14759:SF29">
    <property type="entry name" value="MICROTUBULE-ASSOCIATED PROTEIN 6"/>
    <property type="match status" value="1"/>
</dbReference>
<dbReference type="PANTHER" id="PTHR14759">
    <property type="entry name" value="STOP PROTEIN"/>
    <property type="match status" value="1"/>
</dbReference>
<comment type="function">
    <text evidence="2 4 7 8 9 10">Involved in microtubule stabilization in many cell types, including neuronal cells (PubMed:11413126, PubMed:28521134, PubMed:3456161, PubMed:8700896, PubMed:9660871). Specifically has microtubule cold stabilizing activity (PubMed:3456161). Involved in dendrite morphogenesis and maintenance by regulating lysosomal trafficking via its interaction with TMEM106B (By similarity). Regulates KIF5A-mediated axonal cargo transport (PubMed:28521134). Regulates axonal growth during neuron polarization (PubMed:28521134).</text>
</comment>
<comment type="subunit">
    <text evidence="1 2 4 6 9">Interacts with calmodulin (via C-terminus); the interaction is dependent on Ca(2+) (PubMed:11413126, PubMed:8700896). Interacts (via C-terminus) with TMEM106B (via N-terminus) (PubMed:24357581). Interacts with ZDHHC13 (via ANK repeats) (By similarity). Interacts with ZDHHC17 (via ANK repeats) (By similarity).</text>
</comment>
<comment type="interaction">
    <interactant intactId="EBI-1638469">
        <id>Q63560</id>
    </interactant>
    <interactant intactId="EBI-9316198">
        <id>Q6AYA5</id>
        <label>Tmem106b</label>
    </interactant>
    <organismsDiffer>false</organismsDiffer>
    <experiments>6</experiments>
</comment>
<comment type="subcellular location">
    <subcellularLocation>
        <location evidence="5 7 8 9 10">Cytoplasm</location>
        <location evidence="5 7 8 9 10">Cytoskeleton</location>
    </subcellularLocation>
    <subcellularLocation>
        <location evidence="7">Golgi apparatus</location>
    </subcellularLocation>
    <subcellularLocation>
        <location evidence="7 10">Cell projection</location>
        <location evidence="7 10">Axon</location>
    </subcellularLocation>
    <subcellularLocation>
        <location evidence="7">Cell projection</location>
        <location evidence="7">Dendrite</location>
    </subcellularLocation>
    <subcellularLocation>
        <location evidence="7">Cytoplasmic vesicle</location>
        <location evidence="7">Secretory vesicle membrane</location>
        <topology evidence="7">Lipid-anchor</topology>
        <orientation evidence="7">Cytoplasmic side</orientation>
    </subcellularLocation>
    <text evidence="5 7 9 10">Isoform 1 and isoform 2 associate with axonal microtubules in neuronal cells (PubMed:8700896, PubMed:9660871). Localizes predominantly in the proximal part of the axon (PubMed:28521134). Preferentially concentrated on a portion of the microtubule polymer in which tubulin is modified by detyrosination and acetylation and is also resistant to depolymerization induced by both nocodazole and cold (PubMed:14724383, PubMed:28521134, PubMed:9660871). In unpolarized neurons, localizes to the Golgi and to secretory vesicles accumulating transiently at the tips of a subset of neurites (PubMed:28521134). Following neuronal polarization and during axon outgrowth, accumulates in the axonal growth cone and subsequently localizes throughout the axon (PubMed:28521134). Partially localizes to dendrites in mature neurons (PubMed:28521134).</text>
</comment>
<comment type="alternative products">
    <event type="alternative splicing"/>
    <isoform>
        <id>Q63560-1</id>
        <name>1</name>
        <name>N-STOP</name>
        <name>Neuronal STOP</name>
        <sequence type="displayed"/>
    </isoform>
    <isoform>
        <id>Q63560-2</id>
        <name>2</name>
        <name>E-STOP</name>
        <name>Early STOP</name>
        <sequence type="described" ref="VSP_034728 VSP_034729"/>
    </isoform>
</comment>
<comment type="tissue specificity">
    <text evidence="10">Isoform 1 is specifically expressed in adult brain. Isoform 2 is predominantly expressed in embryonic brain; expression persists at low levels in the adult brain.</text>
</comment>
<comment type="developmental stage">
    <text evidence="7 10">At 17.5 dpc, expressed in brain including hippocampus and corpus callosum (PubMed:28521134). Isoform 1: Expression begins after birth at P1-P5 stages and is maintained in adults (PubMed:28521134, PubMed:9660871). Expressed in mature neurons (PubMed:28521134). Isoform 2: Expressed at 13 dpc, 16 dpc and 18 dpc stages (PubMed:28521134, PubMed:9660871). Expression is increased at P1-P5 stages and persists at low levels in the adult brain (PubMed:28521134, PubMed:9660871). Expressed in unpolarized hippocampal neurons and throughout neuronal development (PubMed:28521134).</text>
</comment>
<comment type="PTM">
    <text evidence="7">Palmitoylated. Probably depalmitoylated by ABHD17A, ABHD17B and ABHD17C. During neuronal polarization, palmitoylation and depalmitoylation cycles regulate MAP6 shuttling between secretory vesicles and microtubules, and its polarized distribution in the axon.</text>
</comment>
<comment type="similarity">
    <text evidence="13">Belongs to the STOP family.</text>
</comment>
<comment type="sequence caution" evidence="13">
    <conflict type="miscellaneous discrepancy">
        <sequence resource="EMBL-CDS" id="AAH78848"/>
    </conflict>
    <text>Contaminating sequence. Potential poly-A sequence.</text>
</comment>
<protein>
    <recommendedName>
        <fullName>Microtubule-associated protein 6</fullName>
        <shortName>MAP-6</shortName>
    </recommendedName>
    <alternativeName>
        <fullName>145-kDa STOP</fullName>
        <shortName>STOP145</shortName>
    </alternativeName>
    <alternativeName>
        <fullName>Stable tubule-only polypeptide</fullName>
        <shortName>STOP</shortName>
    </alternativeName>
</protein>
<organism>
    <name type="scientific">Rattus norvegicus</name>
    <name type="common">Rat</name>
    <dbReference type="NCBI Taxonomy" id="10116"/>
    <lineage>
        <taxon>Eukaryota</taxon>
        <taxon>Metazoa</taxon>
        <taxon>Chordata</taxon>
        <taxon>Craniata</taxon>
        <taxon>Vertebrata</taxon>
        <taxon>Euteleostomi</taxon>
        <taxon>Mammalia</taxon>
        <taxon>Eutheria</taxon>
        <taxon>Euarchontoglires</taxon>
        <taxon>Glires</taxon>
        <taxon>Rodentia</taxon>
        <taxon>Myomorpha</taxon>
        <taxon>Muroidea</taxon>
        <taxon>Muridae</taxon>
        <taxon>Murinae</taxon>
        <taxon>Rattus</taxon>
    </lineage>
</organism>
<feature type="chain" id="PRO_0000344046" description="Microtubule-associated protein 6">
    <location>
        <begin position="1"/>
        <end position="952"/>
    </location>
</feature>
<feature type="repeat" description="Mc-1" evidence="4">
    <location>
        <begin position="222"/>
        <end position="267"/>
    </location>
</feature>
<feature type="repeat" description="Mc-2" evidence="4">
    <location>
        <begin position="268"/>
        <end position="313"/>
    </location>
</feature>
<feature type="repeat" description="Mc-3" evidence="4">
    <location>
        <begin position="314"/>
        <end position="359"/>
    </location>
</feature>
<feature type="repeat" description="Mc-4" evidence="4">
    <location>
        <begin position="360"/>
        <end position="405"/>
    </location>
</feature>
<feature type="repeat" description="Mc-5" evidence="4">
    <location>
        <begin position="406"/>
        <end position="451"/>
    </location>
</feature>
<feature type="region of interest" description="Calmodulin-binding" evidence="4">
    <location>
        <begin position="1"/>
        <end position="15"/>
    </location>
</feature>
<feature type="region of interest" description="Disordered" evidence="3">
    <location>
        <begin position="37"/>
        <end position="457"/>
    </location>
</feature>
<feature type="region of interest" description="Mn 1" evidence="4">
    <location>
        <begin position="116"/>
        <end position="139"/>
    </location>
</feature>
<feature type="region of interest" description="Calmodulin-binding" evidence="4">
    <location>
        <begin position="124"/>
        <end position="138"/>
    </location>
</feature>
<feature type="region of interest" description="Mn 2" evidence="4">
    <location>
        <begin position="151"/>
        <end position="174"/>
    </location>
</feature>
<feature type="region of interest" description="Calmodulin-binding" evidence="4">
    <location>
        <begin position="160"/>
        <end position="174"/>
    </location>
</feature>
<feature type="region of interest" description="Calmodulin-binding" evidence="4">
    <location>
        <begin position="187"/>
        <end position="201"/>
    </location>
</feature>
<feature type="region of interest" description="5 X approximate tandem repeat Mc" evidence="4">
    <location>
        <begin position="222"/>
        <end position="451"/>
    </location>
</feature>
<feature type="region of interest" description="Calmodulin-binding" evidence="4">
    <location>
        <begin position="235"/>
        <end position="249"/>
    </location>
</feature>
<feature type="region of interest" description="Calmodulin-binding" evidence="4">
    <location>
        <begin position="280"/>
        <end position="294"/>
    </location>
</feature>
<feature type="region of interest" description="Calmodulin-binding" evidence="4">
    <location>
        <begin position="325"/>
        <end position="339"/>
    </location>
</feature>
<feature type="region of interest" description="Calmodulin-binding" evidence="4">
    <location>
        <begin position="373"/>
        <end position="387"/>
    </location>
</feature>
<feature type="region of interest" description="Calmodulin-binding" evidence="4">
    <location>
        <begin position="421"/>
        <end position="435"/>
    </location>
</feature>
<feature type="region of interest" description="Mn 3" evidence="4">
    <location>
        <begin position="473"/>
        <end position="496"/>
    </location>
</feature>
<feature type="region of interest" description="Calmodulin-binding" evidence="4">
    <location>
        <begin position="481"/>
        <end position="495"/>
    </location>
</feature>
<feature type="region of interest" description="Disordered" evidence="3">
    <location>
        <begin position="486"/>
        <end position="952"/>
    </location>
</feature>
<feature type="region of interest" description="Calmodulin-binding" evidence="4">
    <location>
        <begin position="532"/>
        <end position="546"/>
    </location>
</feature>
<feature type="region of interest" description="Calmodulin-binding" evidence="4">
    <location>
        <begin position="559"/>
        <end position="573"/>
    </location>
</feature>
<feature type="compositionally biased region" description="Pro residues" evidence="3">
    <location>
        <begin position="41"/>
        <end position="55"/>
    </location>
</feature>
<feature type="compositionally biased region" description="Low complexity" evidence="3">
    <location>
        <begin position="105"/>
        <end position="117"/>
    </location>
</feature>
<feature type="compositionally biased region" description="Basic and acidic residues" evidence="3">
    <location>
        <begin position="119"/>
        <end position="139"/>
    </location>
</feature>
<feature type="compositionally biased region" description="Basic and acidic residues" evidence="3">
    <location>
        <begin position="147"/>
        <end position="171"/>
    </location>
</feature>
<feature type="compositionally biased region" description="Low complexity" evidence="3">
    <location>
        <begin position="221"/>
        <end position="230"/>
    </location>
</feature>
<feature type="compositionally biased region" description="Basic and acidic residues" evidence="3">
    <location>
        <begin position="542"/>
        <end position="551"/>
    </location>
</feature>
<feature type="compositionally biased region" description="Low complexity" evidence="3">
    <location>
        <begin position="552"/>
        <end position="567"/>
    </location>
</feature>
<feature type="compositionally biased region" description="Basic and acidic residues" evidence="3">
    <location>
        <begin position="595"/>
        <end position="621"/>
    </location>
</feature>
<feature type="compositionally biased region" description="Basic and acidic residues" evidence="3">
    <location>
        <begin position="711"/>
        <end position="725"/>
    </location>
</feature>
<feature type="compositionally biased region" description="Pro residues" evidence="3">
    <location>
        <begin position="761"/>
        <end position="775"/>
    </location>
</feature>
<feature type="compositionally biased region" description="Basic and acidic residues" evidence="3">
    <location>
        <begin position="776"/>
        <end position="792"/>
    </location>
</feature>
<feature type="compositionally biased region" description="Basic and acidic residues" evidence="3">
    <location>
        <begin position="821"/>
        <end position="831"/>
    </location>
</feature>
<feature type="compositionally biased region" description="Pro residues" evidence="3">
    <location>
        <begin position="903"/>
        <end position="915"/>
    </location>
</feature>
<feature type="modified residue" description="Phosphoserine" evidence="1">
    <location>
        <position position="98"/>
    </location>
</feature>
<feature type="modified residue" description="Phosphotyrosine" evidence="1">
    <location>
        <position position="141"/>
    </location>
</feature>
<feature type="modified residue" description="Phosphoserine" evidence="15">
    <location>
        <position position="185"/>
    </location>
</feature>
<feature type="modified residue" description="Phosphoserine" evidence="1">
    <location>
        <position position="207"/>
    </location>
</feature>
<feature type="modified residue" description="Phosphoserine" evidence="15">
    <location>
        <position position="590"/>
    </location>
</feature>
<feature type="modified residue" description="Phosphoserine" evidence="15">
    <location>
        <position position="681"/>
    </location>
</feature>
<feature type="modified residue" description="Phosphoserine" evidence="15">
    <location>
        <position position="736"/>
    </location>
</feature>
<feature type="modified residue" description="Phosphoserine" evidence="15">
    <location>
        <position position="951"/>
    </location>
</feature>
<feature type="lipid moiety-binding region" description="S-palmitoyl cysteine" evidence="14">
    <location>
        <position position="5"/>
    </location>
</feature>
<feature type="lipid moiety-binding region" description="S-palmitoyl cysteine" evidence="14">
    <location>
        <position position="10"/>
    </location>
</feature>
<feature type="lipid moiety-binding region" description="S-palmitoyl cysteine" evidence="14">
    <location>
        <position position="11"/>
    </location>
</feature>
<feature type="splice variant" id="VSP_034728" description="In isoform 2." evidence="11 12">
    <original>R</original>
    <variation>RDTRRKAGPAWMVTRTEGHEEKPLPPAQSQTQEGGPAAGKASGADQR</variation>
    <location>
        <position position="325"/>
    </location>
</feature>
<feature type="splice variant" id="VSP_034729" description="In isoform 2." evidence="11 12">
    <location>
        <begin position="615"/>
        <end position="952"/>
    </location>
</feature>
<feature type="mutagenesis site" description="Loss of palmitoylation. Loss of Golgi and secretory vesicle localization; when associated with G-10 and G-11. Loss of axonal polarization; when associated with G-10 and G-11. Increased dendrite localization without affecting association with microtubules; when associated with G-10 and G-11." evidence="7">
    <original>C</original>
    <variation>G</variation>
    <location>
        <position position="5"/>
    </location>
</feature>
<feature type="mutagenesis site" description="Loss of Golgi and secretory vesicle localization; when associated with G-5. Loss of axonal polarization; when associated with G-5. Increased dendrite localization without affecting association with microtubules; when associated with G-5." evidence="7">
    <original>CC</original>
    <variation>GG</variation>
    <location>
        <begin position="10"/>
        <end position="11"/>
    </location>
</feature>
<name>MAP6_RAT</name>
<keyword id="KW-0025">Alternative splicing</keyword>
<keyword id="KW-0112">Calmodulin-binding</keyword>
<keyword id="KW-0966">Cell projection</keyword>
<keyword id="KW-0963">Cytoplasm</keyword>
<keyword id="KW-0968">Cytoplasmic vesicle</keyword>
<keyword id="KW-0206">Cytoskeleton</keyword>
<keyword id="KW-0903">Direct protein sequencing</keyword>
<keyword id="KW-0333">Golgi apparatus</keyword>
<keyword id="KW-0449">Lipoprotein</keyword>
<keyword id="KW-0472">Membrane</keyword>
<keyword id="KW-0493">Microtubule</keyword>
<keyword id="KW-0564">Palmitate</keyword>
<keyword id="KW-0597">Phosphoprotein</keyword>
<keyword id="KW-1185">Reference proteome</keyword>
<keyword id="KW-0677">Repeat</keyword>
<keyword id="KW-0813">Transport</keyword>
<proteinExistence type="evidence at protein level"/>
<sequence length="952" mass="100485">MAWPCITRACCIARFWNQLDKADIAVPLVFTKYSEATEHPGAPPQPPAPPQPGLAPPSRAVAIETQPAQGESDAVARATGPAPGPSGDRETAAAPGRSGLGLGAASGSTSGSGPADSVMRQDYRAWKVQRPEPSCRPRSEYQPSDAPFERETQYQKDFRAWPLPRRGDHPWIPKPVQIPATSQPSPPVLGMPKRRPQSQERGPIQLSADARDPEGAGGAGVPAAGKASGADQRDTRRKAGPAWMVTRTEGHEEKPLPPAQSQTQEGGPAAGKASGADQRDTRRKAGPAWMVTRTEGHEEKPLPPAQSQTQEGGPAAGKASGADQRDTRRKAGPAWMVTRTEGHEETPLPPAQSQTQEGGPAAGKASGADQRDTRRKAGPAWMVTRTEGHEETPLPPAQSQTQEGGPAAGKASGADERDTRRKAGPAWMVRRSEGHEQTTAAHAQGTGPEGGKGRAVADALNRQIREEVTSTVSSSYRNEFRAWTDIKPVKPIKAKPQYKPPDDKMVHETSYSAQFKGEASKPTTADNKVVDRRRIRSLYSEPFKESPKVEKPSVQSSKPKKTSTSQKPLRKAKDKQVASGQAAKKKTTESPSATKPDDKEQSKEMNNKLAEAKESRVKPTSDKNQGPVAKEPHKDQGPVAPGLPKGQGPAVQEPLKDQGPMVPGLPKDQAPVVPGSLKGQSPTAPGPPKDQGAVLLGPMKDLGPVAPASVKDQDHMASELLKNKDSVPLAPAKAQSPLLPEPLKNQSPVVPARAKDQSFPAPAPTPLKDPGPVIPEPEKDGAPMVPERRKDQNASIMASLKNEAPVASESVKNQGLGGPEPAKDTGTDLKGHGSVFVAPVKSQGPVVPEPTKGQDPIIPALAKDQGPILPEPPKNQGPPVVLGPIKNQDPVIPVPLKGQDPVVPAPTKDPGPTAPDPLKSQGPRGPQLPTVSPSPPVMIPTVPHAEYIEGSP</sequence>
<gene>
    <name type="primary">Map6</name>
    <name type="synonym">Mtap6</name>
</gene>
<evidence type="ECO:0000250" key="1">
    <source>
        <dbReference type="UniProtKB" id="Q7TSJ2"/>
    </source>
</evidence>
<evidence type="ECO:0000250" key="2">
    <source>
        <dbReference type="UniProtKB" id="Q96JE9"/>
    </source>
</evidence>
<evidence type="ECO:0000256" key="3">
    <source>
        <dbReference type="SAM" id="MobiDB-lite"/>
    </source>
</evidence>
<evidence type="ECO:0000269" key="4">
    <source>
    </source>
</evidence>
<evidence type="ECO:0000269" key="5">
    <source>
    </source>
</evidence>
<evidence type="ECO:0000269" key="6">
    <source>
    </source>
</evidence>
<evidence type="ECO:0000269" key="7">
    <source>
    </source>
</evidence>
<evidence type="ECO:0000269" key="8">
    <source>
    </source>
</evidence>
<evidence type="ECO:0000269" key="9">
    <source>
    </source>
</evidence>
<evidence type="ECO:0000269" key="10">
    <source>
    </source>
</evidence>
<evidence type="ECO:0000303" key="11">
    <source>
    </source>
</evidence>
<evidence type="ECO:0000303" key="12">
    <source>
    </source>
</evidence>
<evidence type="ECO:0000305" key="13"/>
<evidence type="ECO:0000305" key="14">
    <source>
    </source>
</evidence>
<evidence type="ECO:0007744" key="15">
    <source>
    </source>
</evidence>
<accession>Q63560</accession>
<accession>O88748</accession>
<accession>Q6AYX8</accession>